<protein>
    <recommendedName>
        <fullName evidence="8">AA9 family lytic polysaccharide monooxygenase D</fullName>
        <shortName evidence="8">LPMO9D</shortName>
        <ecNumber evidence="10">1.14.99.56</ecNumber>
    </recommendedName>
    <alternativeName>
        <fullName evidence="9">Cellulase LPMO9D</fullName>
    </alternativeName>
    <alternativeName>
        <fullName evidence="9">Endo-beta-1,4-glucanase LPMO9D</fullName>
        <shortName evidence="9">Endoglucanase LPMO9D</shortName>
    </alternativeName>
    <alternativeName>
        <fullName evidence="9">Glycosyl hydrolase 61 family protein LPMO9D</fullName>
    </alternativeName>
</protein>
<comment type="function">
    <text evidence="2 7">Lytic polysaccharide monooxygenase (LPMO) that depolymerizes crystalline and amorphous polysaccharides via the oxidation of scissile alpha- or beta-(1-4)-glycosidic bonds, yielding C1 or C4 oxidation products (PubMed:27590806). Catalysis by LPMOs requires the reduction of the active-site copper from Cu(II) to Cu(I) by a reducing agent and H(2)O(2) or O(2) as a cosubstrate (By similarity).</text>
</comment>
<comment type="catalytic activity">
    <reaction evidence="10">
        <text>[(1-&gt;4)-beta-D-glucosyl]n+m + reduced acceptor + O2 = 4-dehydro-beta-D-glucosyl-[(1-&gt;4)-beta-D-glucosyl]n-1 + [(1-&gt;4)-beta-D-glucosyl]m + acceptor + H2O.</text>
        <dbReference type="EC" id="1.14.99.56"/>
    </reaction>
</comment>
<comment type="cofactor">
    <cofactor evidence="2">
        <name>Cu(2+)</name>
        <dbReference type="ChEBI" id="CHEBI:29036"/>
    </cofactor>
    <text evidence="2">Binds 1 copper ion per subunit.</text>
</comment>
<comment type="subcellular location">
    <subcellularLocation>
        <location evidence="10">Secreted</location>
    </subcellularLocation>
</comment>
<comment type="biotechnology">
    <text evidence="2">Lignocellulose is the most abundant polymeric composite on Earth and is a recalcitrant but promising renewable substrate for industrial biotechnology applications. Together with cellobiose dehydrogenases (CDHs) an enzymatic system capable of oxidative cellulose cleavage is formed, which increases the efficiency of cellulases and put LPMOs at focus of biofuel research.</text>
</comment>
<comment type="similarity">
    <text evidence="9">Belongs to the polysaccharide monooxygenase AA9 family.</text>
</comment>
<sequence length="344" mass="35383">MKTATSYAAFLLSALAALPHASAHGFVSKVVVNGQSYAGNTPGGDTSPSPIRQISTISPVKGAANKDMFCGYDAQVASQVAAADPGSKVTFTWSGGGGQNWPHNTGPLMTYMGACEGTTCDKYTATDAKWFKIDEVGREANGGDWVQQEIMNGGTYTVTLPSNIAPGDYLIRHEIIALHLGMTEGGAEFYPSCTQVRITGNGSGTPNQTVSFPGAYSDTDPGIWDKNVYDPSAPYTFPGPPLSNLVSGDSGTVDGQGGSTSSATLSGGAAPTGTASGSTPAGTSQPSSTTGTGNAGANPSSGKCSLKSRAAPTTSGNLSANYPRHFSRVMKRLLNDFQTTVHQW</sequence>
<feature type="signal peptide" evidence="4">
    <location>
        <begin position="1"/>
        <end position="23"/>
    </location>
</feature>
<feature type="chain" id="PRO_5004556509" description="AA9 family lytic polysaccharide monooxygenase D" evidence="4">
    <location>
        <begin position="24"/>
        <end position="344"/>
    </location>
</feature>
<feature type="region of interest" description="Disordered" evidence="6">
    <location>
        <begin position="240"/>
        <end position="321"/>
    </location>
</feature>
<feature type="compositionally biased region" description="Low complexity" evidence="6">
    <location>
        <begin position="259"/>
        <end position="292"/>
    </location>
</feature>
<feature type="compositionally biased region" description="Polar residues" evidence="6">
    <location>
        <begin position="311"/>
        <end position="320"/>
    </location>
</feature>
<feature type="binding site" evidence="3">
    <location>
        <position position="24"/>
    </location>
    <ligand>
        <name>Cu(2+)</name>
        <dbReference type="ChEBI" id="CHEBI:29036"/>
        <note>catalytic</note>
    </ligand>
</feature>
<feature type="binding site" evidence="2">
    <location>
        <position position="179"/>
    </location>
    <ligand>
        <name>O2</name>
        <dbReference type="ChEBI" id="CHEBI:15379"/>
    </ligand>
</feature>
<feature type="binding site" evidence="3">
    <location>
        <position position="190"/>
    </location>
    <ligand>
        <name>Cu(2+)</name>
        <dbReference type="ChEBI" id="CHEBI:29036"/>
        <note>catalytic</note>
    </ligand>
</feature>
<feature type="glycosylation site" description="N-linked (GlcNAc...) asparagine" evidence="5">
    <location>
        <position position="201"/>
    </location>
</feature>
<feature type="glycosylation site" description="N-linked (GlcNAc...) asparagine" evidence="5">
    <location>
        <position position="207"/>
    </location>
</feature>
<feature type="glycosylation site" description="N-linked (GlcNAc...) asparagine" evidence="5">
    <location>
        <position position="317"/>
    </location>
</feature>
<feature type="disulfide bond" evidence="1">
    <location>
        <begin position="70"/>
        <end position="193"/>
    </location>
</feature>
<name>LP9D_GLOTA</name>
<gene>
    <name evidence="8" type="primary">LPMO9D</name>
    <name type="ORF">GLOTRDRAFT_69702</name>
</gene>
<evidence type="ECO:0000250" key="1">
    <source>
        <dbReference type="UniProtKB" id="A0A5J6BJN2"/>
    </source>
</evidence>
<evidence type="ECO:0000250" key="2">
    <source>
        <dbReference type="UniProtKB" id="Q1K8B6"/>
    </source>
</evidence>
<evidence type="ECO:0000250" key="3">
    <source>
        <dbReference type="UniProtKB" id="Q7Z9M7"/>
    </source>
</evidence>
<evidence type="ECO:0000255" key="4"/>
<evidence type="ECO:0000255" key="5">
    <source>
        <dbReference type="PROSITE-ProRule" id="PRU00498"/>
    </source>
</evidence>
<evidence type="ECO:0000256" key="6">
    <source>
        <dbReference type="SAM" id="MobiDB-lite"/>
    </source>
</evidence>
<evidence type="ECO:0000269" key="7">
    <source>
    </source>
</evidence>
<evidence type="ECO:0000303" key="8">
    <source>
    </source>
</evidence>
<evidence type="ECO:0000305" key="9"/>
<evidence type="ECO:0000305" key="10">
    <source>
    </source>
</evidence>
<dbReference type="EC" id="1.14.99.56" evidence="10"/>
<dbReference type="EMBL" id="KB469296">
    <property type="protein sequence ID" value="EPQ61333.1"/>
    <property type="molecule type" value="Genomic_DNA"/>
</dbReference>
<dbReference type="RefSeq" id="XP_007861524.1">
    <property type="nucleotide sequence ID" value="XM_007863333.1"/>
</dbReference>
<dbReference type="SMR" id="S7QP81"/>
<dbReference type="STRING" id="670483.S7QP81"/>
<dbReference type="GeneID" id="19308003"/>
<dbReference type="KEGG" id="gtr:GLOTRDRAFT_69702"/>
<dbReference type="eggNOG" id="ENOG502SKJ0">
    <property type="taxonomic scope" value="Eukaryota"/>
</dbReference>
<dbReference type="HOGENOM" id="CLU_031730_2_2_1"/>
<dbReference type="OMA" id="YPKHISR"/>
<dbReference type="OrthoDB" id="4849160at2759"/>
<dbReference type="Proteomes" id="UP000030669">
    <property type="component" value="Unassembled WGS sequence"/>
</dbReference>
<dbReference type="GO" id="GO:0005576">
    <property type="term" value="C:extracellular region"/>
    <property type="evidence" value="ECO:0007669"/>
    <property type="project" value="UniProtKB-SubCell"/>
</dbReference>
<dbReference type="GO" id="GO:0046872">
    <property type="term" value="F:metal ion binding"/>
    <property type="evidence" value="ECO:0007669"/>
    <property type="project" value="UniProtKB-KW"/>
</dbReference>
<dbReference type="GO" id="GO:0004497">
    <property type="term" value="F:monooxygenase activity"/>
    <property type="evidence" value="ECO:0007669"/>
    <property type="project" value="UniProtKB-KW"/>
</dbReference>
<dbReference type="GO" id="GO:0030245">
    <property type="term" value="P:cellulose catabolic process"/>
    <property type="evidence" value="ECO:0007669"/>
    <property type="project" value="UniProtKB-KW"/>
</dbReference>
<dbReference type="CDD" id="cd21175">
    <property type="entry name" value="LPMO_AA9"/>
    <property type="match status" value="1"/>
</dbReference>
<dbReference type="Gene3D" id="2.70.50.70">
    <property type="match status" value="1"/>
</dbReference>
<dbReference type="InterPro" id="IPR049892">
    <property type="entry name" value="AA9"/>
</dbReference>
<dbReference type="InterPro" id="IPR005103">
    <property type="entry name" value="AA9_LPMO"/>
</dbReference>
<dbReference type="PANTHER" id="PTHR33353:SF10">
    <property type="entry name" value="ENDO-BETA-1,4-GLUCANASE D"/>
    <property type="match status" value="1"/>
</dbReference>
<dbReference type="PANTHER" id="PTHR33353">
    <property type="entry name" value="PUTATIVE (AFU_ORTHOLOGUE AFUA_1G12560)-RELATED"/>
    <property type="match status" value="1"/>
</dbReference>
<dbReference type="Pfam" id="PF03443">
    <property type="entry name" value="AA9"/>
    <property type="match status" value="1"/>
</dbReference>
<organism>
    <name type="scientific">Gloeophyllum trabeum (strain ATCC 11539 / FP-39264 / Madison 617)</name>
    <name type="common">Brown rot fungus</name>
    <dbReference type="NCBI Taxonomy" id="670483"/>
    <lineage>
        <taxon>Eukaryota</taxon>
        <taxon>Fungi</taxon>
        <taxon>Dikarya</taxon>
        <taxon>Basidiomycota</taxon>
        <taxon>Agaricomycotina</taxon>
        <taxon>Agaricomycetes</taxon>
        <taxon>Gloeophyllales</taxon>
        <taxon>Gloeophyllaceae</taxon>
        <taxon>Gloeophyllum</taxon>
    </lineage>
</organism>
<keyword id="KW-0119">Carbohydrate metabolism</keyword>
<keyword id="KW-0136">Cellulose degradation</keyword>
<keyword id="KW-0186">Copper</keyword>
<keyword id="KW-1015">Disulfide bond</keyword>
<keyword id="KW-0325">Glycoprotein</keyword>
<keyword id="KW-0479">Metal-binding</keyword>
<keyword id="KW-0503">Monooxygenase</keyword>
<keyword id="KW-0560">Oxidoreductase</keyword>
<keyword id="KW-0624">Polysaccharide degradation</keyword>
<keyword id="KW-1185">Reference proteome</keyword>
<keyword id="KW-0964">Secreted</keyword>
<keyword id="KW-0732">Signal</keyword>
<accession>S7QP81</accession>
<proteinExistence type="inferred from homology"/>
<reference key="1">
    <citation type="journal article" date="2012" name="Science">
        <title>The Paleozoic origin of enzymatic lignin decomposition reconstructed from 31 fungal genomes.</title>
        <authorList>
            <person name="Floudas D."/>
            <person name="Binder M."/>
            <person name="Riley R."/>
            <person name="Barry K."/>
            <person name="Blanchette R.A."/>
            <person name="Henrissat B."/>
            <person name="Martinez A.T."/>
            <person name="Otillar R."/>
            <person name="Spatafora J.W."/>
            <person name="Yadav J.S."/>
            <person name="Aerts A."/>
            <person name="Benoit I."/>
            <person name="Boyd A."/>
            <person name="Carlson A."/>
            <person name="Copeland A."/>
            <person name="Coutinho P.M."/>
            <person name="de Vries R.P."/>
            <person name="Ferreira P."/>
            <person name="Findley K."/>
            <person name="Foster B."/>
            <person name="Gaskell J."/>
            <person name="Glotzer D."/>
            <person name="Gorecki P."/>
            <person name="Heitman J."/>
            <person name="Hesse C."/>
            <person name="Hori C."/>
            <person name="Igarashi K."/>
            <person name="Jurgens J.A."/>
            <person name="Kallen N."/>
            <person name="Kersten P."/>
            <person name="Kohler A."/>
            <person name="Kuees U."/>
            <person name="Kumar T.K.A."/>
            <person name="Kuo A."/>
            <person name="LaButti K."/>
            <person name="Larrondo L.F."/>
            <person name="Lindquist E."/>
            <person name="Ling A."/>
            <person name="Lombard V."/>
            <person name="Lucas S."/>
            <person name="Lundell T."/>
            <person name="Martin R."/>
            <person name="McLaughlin D.J."/>
            <person name="Morgenstern I."/>
            <person name="Morin E."/>
            <person name="Murat C."/>
            <person name="Nagy L.G."/>
            <person name="Nolan M."/>
            <person name="Ohm R.A."/>
            <person name="Patyshakuliyeva A."/>
            <person name="Rokas A."/>
            <person name="Ruiz-Duenas F.J."/>
            <person name="Sabat G."/>
            <person name="Salamov A."/>
            <person name="Samejima M."/>
            <person name="Schmutz J."/>
            <person name="Slot J.C."/>
            <person name="St John F."/>
            <person name="Stenlid J."/>
            <person name="Sun H."/>
            <person name="Sun S."/>
            <person name="Syed K."/>
            <person name="Tsang A."/>
            <person name="Wiebenga A."/>
            <person name="Young D."/>
            <person name="Pisabarro A."/>
            <person name="Eastwood D.C."/>
            <person name="Martin F."/>
            <person name="Cullen D."/>
            <person name="Grigoriev I.V."/>
            <person name="Hibbett D.S."/>
        </authorList>
    </citation>
    <scope>NUCLEOTIDE SEQUENCE [LARGE SCALE GENOMIC DNA]</scope>
    <source>
        <strain>ATCC 11539 / FP-39264 / Madison 617</strain>
    </source>
</reference>
<reference key="2">
    <citation type="journal article" date="2016" name="Appl. Environ. Microbiol.">
        <title>A Lytic Polysaccharide Monooxygenase with Broad Xyloglucan Specificity from the Brown-Rot Fungus Gloeophyllum trabeum and Its Action on Cellulose-Xyloglucan Complexes.</title>
        <authorList>
            <person name="Kojima Y."/>
            <person name="Varnai A."/>
            <person name="Ishida T."/>
            <person name="Sunagawa N."/>
            <person name="Petrovic D.M."/>
            <person name="Igarashi K."/>
            <person name="Jellison J."/>
            <person name="Goodell B."/>
            <person name="Alfredsen G."/>
            <person name="Westereng B."/>
            <person name="Eijsink V.G.H."/>
            <person name="Yoshida M."/>
        </authorList>
    </citation>
    <scope>FUNCTION</scope>
</reference>